<proteinExistence type="inferred from homology"/>
<protein>
    <recommendedName>
        <fullName evidence="1">DNA-directed RNA polymerase subunit beta</fullName>
        <shortName evidence="1">RNAP subunit beta</shortName>
        <ecNumber evidence="1">2.7.7.6</ecNumber>
    </recommendedName>
    <alternativeName>
        <fullName evidence="1">RNA polymerase subunit beta</fullName>
    </alternativeName>
    <alternativeName>
        <fullName evidence="1">Transcriptase subunit beta</fullName>
    </alternativeName>
</protein>
<keyword id="KW-0240">DNA-directed RNA polymerase</keyword>
<keyword id="KW-0548">Nucleotidyltransferase</keyword>
<keyword id="KW-1185">Reference proteome</keyword>
<keyword id="KW-0804">Transcription</keyword>
<keyword id="KW-0808">Transferase</keyword>
<reference key="1">
    <citation type="journal article" date="2005" name="Proc. Natl. Acad. Sci. U.S.A.">
        <title>The complete genome sequence of Mycobacterium avium subspecies paratuberculosis.</title>
        <authorList>
            <person name="Li L."/>
            <person name="Bannantine J.P."/>
            <person name="Zhang Q."/>
            <person name="Amonsin A."/>
            <person name="May B.J."/>
            <person name="Alt D."/>
            <person name="Banerji N."/>
            <person name="Kanjilal S."/>
            <person name="Kapur V."/>
        </authorList>
    </citation>
    <scope>NUCLEOTIDE SEQUENCE [LARGE SCALE GENOMIC DNA]</scope>
    <source>
        <strain>ATCC BAA-968 / K-10</strain>
    </source>
</reference>
<sequence length="1175" mass="129760">MLEGCILADFRQSKTDRPQSSSNGSSSLNGSVPGAPNRVSFAKLREPLEVPGLLDVQIDSFEWLIGAPRWREAAIARGDAEPKGGLEEVLDELSPIEDFSGSMSLSFSDPRFDEVKAPVDECKDKDMTYAAPLFVTAEFINNNTGEIKSQTVFMGDFPMMTEKGTFIINGTERVVVSQLVRSPGVYFDETIDKSTEKTLHSVKVIPSRGAWLEFDVDKRDTVGVRIDRKRRQPVTVLLKALGWTNEQITERFGFSEIMMSTLEKDNTAGTDEALLDIYRKLRPGEPPTKESAQTLLENLFFKEKRYDLARVGRYKVNKKLGLHAGEPITSSTLTEEDVVATIEYLVRLHEGQPTMTVPGGIEVPVETDDIDHFGNRRLRTVGELIQNQIRVGMSRMERVVRERMTTQDVEAITPQTLINIRPVVAAIKEFFGTSQLSQFMDQNNPLSGLTHKRRLSALGPGGLSRERAGLEVRDVHPSHYGRMCPIETPEGPNIGLIGSLSVYARVNPFGFIETPYRKVVDGVVTDEIHYLTADEEDRHVVAQANSPIDDKGRFAEARVLVRRKAGEVEYVPSSEVDYMDVSPRQMVSVATAMIPFLEHDDANRALMGANMQRQAVPLVRSEAPLVGTGMELRAAIDAGDVVVAEKSGVIEEVSADYITVMADDGTRHTYRMRKFERSNHGTCANQSPIVDAGDRVEAGQVIADGPCTENGEMALGKNLLVAIMPWEGHNYEDAIILSNRLVEEDVLTSIHIEEHEIDARDTKLGAEEITRDIPNVSDEVLADLDERGIVRIGAEVRDGDILVGKVTPKGETELTPEERLLRAIFGEKAREVRDTSLKVPHGESGKVIGIRVFSREDDDELPAGVNELVRVYVAQKRKISDGDKLAGRHGNKGVIGKILPQEDMPFLPDGTPVDIILNTHGVPRRMNIGQILETHLGWVAKSGWNIDGNPEWAVNLPEELRHAQPNQIVSTPVFDGAKEEELAGMLSCTLPNRDGEVMVDGDGKAVLFDGRSGEPFPYPVTVGYMYIMKLHHLVDDKIHARSTGPYSMITQQPLGGKAQFGGQRFGEMECWAMQAYGAAYTLQELLTIKSDDTVGRVKVYEAIVKGENIPEPGIPESFKVLLKELQSLCLNVEVLSSDGAAIELREGEDEDLERAAANLGINLSRNESASVEDLA</sequence>
<accession>Q73SE4</accession>
<organism>
    <name type="scientific">Mycolicibacterium paratuberculosis (strain ATCC BAA-968 / K-10)</name>
    <name type="common">Mycobacterium paratuberculosis</name>
    <dbReference type="NCBI Taxonomy" id="262316"/>
    <lineage>
        <taxon>Bacteria</taxon>
        <taxon>Bacillati</taxon>
        <taxon>Actinomycetota</taxon>
        <taxon>Actinomycetes</taxon>
        <taxon>Mycobacteriales</taxon>
        <taxon>Mycobacteriaceae</taxon>
        <taxon>Mycobacterium</taxon>
        <taxon>Mycobacterium avium complex (MAC)</taxon>
    </lineage>
</organism>
<feature type="chain" id="PRO_0000224074" description="DNA-directed RNA polymerase subunit beta">
    <location>
        <begin position="1"/>
        <end position="1175"/>
    </location>
</feature>
<feature type="region of interest" description="Disordered" evidence="2">
    <location>
        <begin position="12"/>
        <end position="33"/>
    </location>
</feature>
<feature type="compositionally biased region" description="Low complexity" evidence="2">
    <location>
        <begin position="20"/>
        <end position="31"/>
    </location>
</feature>
<gene>
    <name evidence="1" type="primary">rpoB</name>
    <name type="ordered locus">MAP_4130</name>
</gene>
<evidence type="ECO:0000255" key="1">
    <source>
        <dbReference type="HAMAP-Rule" id="MF_01321"/>
    </source>
</evidence>
<evidence type="ECO:0000256" key="2">
    <source>
        <dbReference type="SAM" id="MobiDB-lite"/>
    </source>
</evidence>
<evidence type="ECO:0000305" key="3"/>
<dbReference type="EC" id="2.7.7.6" evidence="1"/>
<dbReference type="EMBL" id="AE016958">
    <property type="protein sequence ID" value="AAS06680.1"/>
    <property type="status" value="ALT_INIT"/>
    <property type="molecule type" value="Genomic_DNA"/>
</dbReference>
<dbReference type="SMR" id="Q73SE4"/>
<dbReference type="STRING" id="262316.MAP_4130"/>
<dbReference type="KEGG" id="mpa:MAP_4130"/>
<dbReference type="eggNOG" id="COG0085">
    <property type="taxonomic scope" value="Bacteria"/>
</dbReference>
<dbReference type="HOGENOM" id="CLU_000524_4_3_11"/>
<dbReference type="Proteomes" id="UP000000580">
    <property type="component" value="Chromosome"/>
</dbReference>
<dbReference type="GO" id="GO:0000428">
    <property type="term" value="C:DNA-directed RNA polymerase complex"/>
    <property type="evidence" value="ECO:0007669"/>
    <property type="project" value="UniProtKB-KW"/>
</dbReference>
<dbReference type="GO" id="GO:0003677">
    <property type="term" value="F:DNA binding"/>
    <property type="evidence" value="ECO:0007669"/>
    <property type="project" value="UniProtKB-UniRule"/>
</dbReference>
<dbReference type="GO" id="GO:0003899">
    <property type="term" value="F:DNA-directed RNA polymerase activity"/>
    <property type="evidence" value="ECO:0007669"/>
    <property type="project" value="UniProtKB-UniRule"/>
</dbReference>
<dbReference type="GO" id="GO:0032549">
    <property type="term" value="F:ribonucleoside binding"/>
    <property type="evidence" value="ECO:0007669"/>
    <property type="project" value="InterPro"/>
</dbReference>
<dbReference type="GO" id="GO:0006351">
    <property type="term" value="P:DNA-templated transcription"/>
    <property type="evidence" value="ECO:0007669"/>
    <property type="project" value="UniProtKB-UniRule"/>
</dbReference>
<dbReference type="CDD" id="cd00653">
    <property type="entry name" value="RNA_pol_B_RPB2"/>
    <property type="match status" value="1"/>
</dbReference>
<dbReference type="FunFam" id="2.40.50.150:FF:000001">
    <property type="entry name" value="DNA-directed RNA polymerase subunit beta"/>
    <property type="match status" value="1"/>
</dbReference>
<dbReference type="FunFam" id="3.90.1800.10:FF:000005">
    <property type="entry name" value="DNA-directed RNA polymerase subunit beta"/>
    <property type="match status" value="1"/>
</dbReference>
<dbReference type="Gene3D" id="2.40.50.100">
    <property type="match status" value="1"/>
</dbReference>
<dbReference type="Gene3D" id="2.40.50.150">
    <property type="match status" value="1"/>
</dbReference>
<dbReference type="Gene3D" id="3.90.1100.10">
    <property type="match status" value="1"/>
</dbReference>
<dbReference type="Gene3D" id="2.30.150.10">
    <property type="entry name" value="DNA-directed RNA polymerase, beta subunit, external 1 domain"/>
    <property type="match status" value="1"/>
</dbReference>
<dbReference type="Gene3D" id="2.40.270.10">
    <property type="entry name" value="DNA-directed RNA polymerase, subunit 2, domain 6"/>
    <property type="match status" value="1"/>
</dbReference>
<dbReference type="Gene3D" id="3.90.1800.10">
    <property type="entry name" value="RNA polymerase alpha subunit dimerisation domain"/>
    <property type="match status" value="1"/>
</dbReference>
<dbReference type="Gene3D" id="3.90.1110.10">
    <property type="entry name" value="RNA polymerase Rpb2, domain 2"/>
    <property type="match status" value="1"/>
</dbReference>
<dbReference type="HAMAP" id="MF_01321">
    <property type="entry name" value="RNApol_bact_RpoB"/>
    <property type="match status" value="1"/>
</dbReference>
<dbReference type="InterPro" id="IPR042107">
    <property type="entry name" value="DNA-dir_RNA_pol_bsu_ext_1_sf"/>
</dbReference>
<dbReference type="InterPro" id="IPR019462">
    <property type="entry name" value="DNA-dir_RNA_pol_bsu_external_1"/>
</dbReference>
<dbReference type="InterPro" id="IPR015712">
    <property type="entry name" value="DNA-dir_RNA_pol_su2"/>
</dbReference>
<dbReference type="InterPro" id="IPR007120">
    <property type="entry name" value="DNA-dir_RNAP_su2_dom"/>
</dbReference>
<dbReference type="InterPro" id="IPR037033">
    <property type="entry name" value="DNA-dir_RNAP_su2_hyb_sf"/>
</dbReference>
<dbReference type="InterPro" id="IPR010243">
    <property type="entry name" value="RNA_pol_bsu_bac"/>
</dbReference>
<dbReference type="InterPro" id="IPR007121">
    <property type="entry name" value="RNA_pol_bsu_CS"/>
</dbReference>
<dbReference type="InterPro" id="IPR007644">
    <property type="entry name" value="RNA_pol_bsu_protrusion"/>
</dbReference>
<dbReference type="InterPro" id="IPR007642">
    <property type="entry name" value="RNA_pol_Rpb2_2"/>
</dbReference>
<dbReference type="InterPro" id="IPR037034">
    <property type="entry name" value="RNA_pol_Rpb2_2_sf"/>
</dbReference>
<dbReference type="InterPro" id="IPR007645">
    <property type="entry name" value="RNA_pol_Rpb2_3"/>
</dbReference>
<dbReference type="InterPro" id="IPR007641">
    <property type="entry name" value="RNA_pol_Rpb2_7"/>
</dbReference>
<dbReference type="InterPro" id="IPR014724">
    <property type="entry name" value="RNA_pol_RPB2_OB-fold"/>
</dbReference>
<dbReference type="NCBIfam" id="NF001616">
    <property type="entry name" value="PRK00405.1"/>
    <property type="match status" value="1"/>
</dbReference>
<dbReference type="NCBIfam" id="TIGR02013">
    <property type="entry name" value="rpoB"/>
    <property type="match status" value="1"/>
</dbReference>
<dbReference type="PANTHER" id="PTHR20856">
    <property type="entry name" value="DNA-DIRECTED RNA POLYMERASE I SUBUNIT 2"/>
    <property type="match status" value="1"/>
</dbReference>
<dbReference type="Pfam" id="PF04563">
    <property type="entry name" value="RNA_pol_Rpb2_1"/>
    <property type="match status" value="1"/>
</dbReference>
<dbReference type="Pfam" id="PF04561">
    <property type="entry name" value="RNA_pol_Rpb2_2"/>
    <property type="match status" value="1"/>
</dbReference>
<dbReference type="Pfam" id="PF04565">
    <property type="entry name" value="RNA_pol_Rpb2_3"/>
    <property type="match status" value="1"/>
</dbReference>
<dbReference type="Pfam" id="PF10385">
    <property type="entry name" value="RNA_pol_Rpb2_45"/>
    <property type="match status" value="1"/>
</dbReference>
<dbReference type="Pfam" id="PF00562">
    <property type="entry name" value="RNA_pol_Rpb2_6"/>
    <property type="match status" value="1"/>
</dbReference>
<dbReference type="Pfam" id="PF04560">
    <property type="entry name" value="RNA_pol_Rpb2_7"/>
    <property type="match status" value="1"/>
</dbReference>
<dbReference type="SUPFAM" id="SSF64484">
    <property type="entry name" value="beta and beta-prime subunits of DNA dependent RNA-polymerase"/>
    <property type="match status" value="1"/>
</dbReference>
<dbReference type="PROSITE" id="PS01166">
    <property type="entry name" value="RNA_POL_BETA"/>
    <property type="match status" value="1"/>
</dbReference>
<comment type="function">
    <text evidence="1">DNA-dependent RNA polymerase catalyzes the transcription of DNA into RNA using the four ribonucleoside triphosphates as substrates.</text>
</comment>
<comment type="catalytic activity">
    <reaction evidence="1">
        <text>RNA(n) + a ribonucleoside 5'-triphosphate = RNA(n+1) + diphosphate</text>
        <dbReference type="Rhea" id="RHEA:21248"/>
        <dbReference type="Rhea" id="RHEA-COMP:14527"/>
        <dbReference type="Rhea" id="RHEA-COMP:17342"/>
        <dbReference type="ChEBI" id="CHEBI:33019"/>
        <dbReference type="ChEBI" id="CHEBI:61557"/>
        <dbReference type="ChEBI" id="CHEBI:140395"/>
        <dbReference type="EC" id="2.7.7.6"/>
    </reaction>
</comment>
<comment type="subunit">
    <text evidence="1">The RNAP catalytic core consists of 2 alpha, 1 beta, 1 beta' and 1 omega subunit. When a sigma factor is associated with the core the holoenzyme is formed, which can initiate transcription.</text>
</comment>
<comment type="similarity">
    <text evidence="1">Belongs to the RNA polymerase beta chain family.</text>
</comment>
<comment type="sequence caution" evidence="3">
    <conflict type="erroneous initiation">
        <sequence resource="EMBL-CDS" id="AAS06680"/>
    </conflict>
</comment>
<name>RPOB_MYCPA</name>